<proteinExistence type="inferred from homology"/>
<reference key="1">
    <citation type="journal article" date="1998" name="Mol. Biol. Evol.">
        <title>Molecular systematics and paleobiogeography of the South American sigmodontine rodents.</title>
        <authorList>
            <person name="Engel S.R."/>
            <person name="Hogan K.M."/>
            <person name="Taylor J.F."/>
            <person name="Davis S.K."/>
        </authorList>
    </citation>
    <scope>NUCLEOTIDE SEQUENCE [GENOMIC DNA]</scope>
</reference>
<geneLocation type="mitochondrion"/>
<organism>
    <name type="scientific">Sigmodon hispidus</name>
    <name type="common">Hispid cotton rat</name>
    <dbReference type="NCBI Taxonomy" id="42415"/>
    <lineage>
        <taxon>Eukaryota</taxon>
        <taxon>Metazoa</taxon>
        <taxon>Chordata</taxon>
        <taxon>Craniata</taxon>
        <taxon>Vertebrata</taxon>
        <taxon>Euteleostomi</taxon>
        <taxon>Mammalia</taxon>
        <taxon>Eutheria</taxon>
        <taxon>Euarchontoglires</taxon>
        <taxon>Glires</taxon>
        <taxon>Rodentia</taxon>
        <taxon>Myomorpha</taxon>
        <taxon>Muroidea</taxon>
        <taxon>Cricetidae</taxon>
        <taxon>Sigmodontinae</taxon>
        <taxon>Sigmodon</taxon>
    </lineage>
</organism>
<keyword id="KW-0249">Electron transport</keyword>
<keyword id="KW-0472">Membrane</keyword>
<keyword id="KW-0496">Mitochondrion</keyword>
<keyword id="KW-0999">Mitochondrion inner membrane</keyword>
<keyword id="KW-0520">NAD</keyword>
<keyword id="KW-0679">Respiratory chain</keyword>
<keyword id="KW-1278">Translocase</keyword>
<keyword id="KW-0812">Transmembrane</keyword>
<keyword id="KW-1133">Transmembrane helix</keyword>
<keyword id="KW-0813">Transport</keyword>
<keyword id="KW-0830">Ubiquinone</keyword>
<gene>
    <name evidence="1" type="primary">MT-ND3</name>
    <name type="synonym">MTND3</name>
    <name type="synonym">NADH3</name>
    <name type="synonym">ND3</name>
</gene>
<comment type="function">
    <text evidence="1">Core subunit of the mitochondrial membrane respiratory chain NADH dehydrogenase (Complex I) which catalyzes electron transfer from NADH through the respiratory chain, using ubiquinone as an electron acceptor. Essential for the catalytic activity of complex I.</text>
</comment>
<comment type="catalytic activity">
    <reaction evidence="1">
        <text>a ubiquinone + NADH + 5 H(+)(in) = a ubiquinol + NAD(+) + 4 H(+)(out)</text>
        <dbReference type="Rhea" id="RHEA:29091"/>
        <dbReference type="Rhea" id="RHEA-COMP:9565"/>
        <dbReference type="Rhea" id="RHEA-COMP:9566"/>
        <dbReference type="ChEBI" id="CHEBI:15378"/>
        <dbReference type="ChEBI" id="CHEBI:16389"/>
        <dbReference type="ChEBI" id="CHEBI:17976"/>
        <dbReference type="ChEBI" id="CHEBI:57540"/>
        <dbReference type="ChEBI" id="CHEBI:57945"/>
        <dbReference type="EC" id="7.1.1.2"/>
    </reaction>
</comment>
<comment type="subunit">
    <text evidence="1">Core subunit of respiratory chain NADH dehydrogenase (Complex I) which is composed of 45 different subunits. Interacts with TMEM186. Interacts with TMEM242 (By similarity).</text>
</comment>
<comment type="subcellular location">
    <subcellularLocation>
        <location evidence="2">Mitochondrion inner membrane</location>
        <topology evidence="3">Multi-pass membrane protein</topology>
    </subcellularLocation>
</comment>
<comment type="similarity">
    <text evidence="4">Belongs to the complex I subunit 3 family.</text>
</comment>
<accession>O21566</accession>
<sequence length="115" mass="13116">MNLFVALFINASLSFILISVAFWLPQLNIYTEKASPYECGFDPLSSARLPFSMKFFLVAITFLLFDLEIALLLPLPWAIQITKLSAMMITSFILISILALGLIYEWMNKGLEWTE</sequence>
<evidence type="ECO:0000250" key="1">
    <source>
        <dbReference type="UniProtKB" id="P03897"/>
    </source>
</evidence>
<evidence type="ECO:0000250" key="2">
    <source>
        <dbReference type="UniProtKB" id="P03898"/>
    </source>
</evidence>
<evidence type="ECO:0000255" key="3"/>
<evidence type="ECO:0000305" key="4"/>
<dbReference type="EC" id="7.1.1.2" evidence="1"/>
<dbReference type="EMBL" id="U83823">
    <property type="protein sequence ID" value="AAB87238.1"/>
    <property type="molecule type" value="Genomic_DNA"/>
</dbReference>
<dbReference type="PIR" id="T17090">
    <property type="entry name" value="T17090"/>
</dbReference>
<dbReference type="SMR" id="O21566"/>
<dbReference type="GO" id="GO:0005743">
    <property type="term" value="C:mitochondrial inner membrane"/>
    <property type="evidence" value="ECO:0000250"/>
    <property type="project" value="UniProtKB"/>
</dbReference>
<dbReference type="GO" id="GO:0030964">
    <property type="term" value="C:NADH dehydrogenase complex"/>
    <property type="evidence" value="ECO:0007669"/>
    <property type="project" value="TreeGrafter"/>
</dbReference>
<dbReference type="GO" id="GO:0008137">
    <property type="term" value="F:NADH dehydrogenase (ubiquinone) activity"/>
    <property type="evidence" value="ECO:0000250"/>
    <property type="project" value="UniProtKB"/>
</dbReference>
<dbReference type="GO" id="GO:0006120">
    <property type="term" value="P:mitochondrial electron transport, NADH to ubiquinone"/>
    <property type="evidence" value="ECO:0000250"/>
    <property type="project" value="UniProtKB"/>
</dbReference>
<dbReference type="FunFam" id="1.20.58.1610:FF:000004">
    <property type="entry name" value="NADH-quinone oxidoreductase subunit A"/>
    <property type="match status" value="1"/>
</dbReference>
<dbReference type="Gene3D" id="1.20.58.1610">
    <property type="entry name" value="NADH:ubiquinone/plastoquinone oxidoreductase, chain 3"/>
    <property type="match status" value="1"/>
</dbReference>
<dbReference type="InterPro" id="IPR000440">
    <property type="entry name" value="NADH_UbQ/plastoQ_OxRdtase_su3"/>
</dbReference>
<dbReference type="InterPro" id="IPR038430">
    <property type="entry name" value="NDAH_ubi_oxred_su3_sf"/>
</dbReference>
<dbReference type="PANTHER" id="PTHR11058">
    <property type="entry name" value="NADH-UBIQUINONE OXIDOREDUCTASE CHAIN 3"/>
    <property type="match status" value="1"/>
</dbReference>
<dbReference type="PANTHER" id="PTHR11058:SF9">
    <property type="entry name" value="NADH-UBIQUINONE OXIDOREDUCTASE CHAIN 3"/>
    <property type="match status" value="1"/>
</dbReference>
<dbReference type="Pfam" id="PF00507">
    <property type="entry name" value="Oxidored_q4"/>
    <property type="match status" value="1"/>
</dbReference>
<name>NU3M_SIGHI</name>
<protein>
    <recommendedName>
        <fullName evidence="1">NADH-ubiquinone oxidoreductase chain 3</fullName>
        <ecNumber evidence="1">7.1.1.2</ecNumber>
    </recommendedName>
    <alternativeName>
        <fullName>NADH dehydrogenase subunit 3</fullName>
    </alternativeName>
</protein>
<feature type="chain" id="PRO_0000117832" description="NADH-ubiquinone oxidoreductase chain 3">
    <location>
        <begin position="1"/>
        <end position="115"/>
    </location>
</feature>
<feature type="transmembrane region" description="Helical" evidence="3">
    <location>
        <begin position="3"/>
        <end position="23"/>
    </location>
</feature>
<feature type="transmembrane region" description="Helical" evidence="3">
    <location>
        <begin position="55"/>
        <end position="75"/>
    </location>
</feature>
<feature type="transmembrane region" description="Helical" evidence="3">
    <location>
        <begin position="84"/>
        <end position="104"/>
    </location>
</feature>